<keyword id="KW-0998">Cell outer membrane</keyword>
<keyword id="KW-0143">Chaperone</keyword>
<keyword id="KW-0449">Lipoprotein</keyword>
<keyword id="KW-0472">Membrane</keyword>
<keyword id="KW-0564">Palmitate</keyword>
<keyword id="KW-0653">Protein transport</keyword>
<keyword id="KW-0732">Signal</keyword>
<keyword id="KW-0813">Transport</keyword>
<organism>
    <name type="scientific">Bordetella parapertussis (strain 12822 / ATCC BAA-587 / NCTC 13253)</name>
    <dbReference type="NCBI Taxonomy" id="257311"/>
    <lineage>
        <taxon>Bacteria</taxon>
        <taxon>Pseudomonadati</taxon>
        <taxon>Pseudomonadota</taxon>
        <taxon>Betaproteobacteria</taxon>
        <taxon>Burkholderiales</taxon>
        <taxon>Alcaligenaceae</taxon>
        <taxon>Bordetella</taxon>
    </lineage>
</organism>
<reference key="1">
    <citation type="journal article" date="2003" name="Nat. Genet.">
        <title>Comparative analysis of the genome sequences of Bordetella pertussis, Bordetella parapertussis and Bordetella bronchiseptica.</title>
        <authorList>
            <person name="Parkhill J."/>
            <person name="Sebaihia M."/>
            <person name="Preston A."/>
            <person name="Murphy L.D."/>
            <person name="Thomson N.R."/>
            <person name="Harris D.E."/>
            <person name="Holden M.T.G."/>
            <person name="Churcher C.M."/>
            <person name="Bentley S.D."/>
            <person name="Mungall K.L."/>
            <person name="Cerdeno-Tarraga A.-M."/>
            <person name="Temple L."/>
            <person name="James K.D."/>
            <person name="Harris B."/>
            <person name="Quail M.A."/>
            <person name="Achtman M."/>
            <person name="Atkin R."/>
            <person name="Baker S."/>
            <person name="Basham D."/>
            <person name="Bason N."/>
            <person name="Cherevach I."/>
            <person name="Chillingworth T."/>
            <person name="Collins M."/>
            <person name="Cronin A."/>
            <person name="Davis P."/>
            <person name="Doggett J."/>
            <person name="Feltwell T."/>
            <person name="Goble A."/>
            <person name="Hamlin N."/>
            <person name="Hauser H."/>
            <person name="Holroyd S."/>
            <person name="Jagels K."/>
            <person name="Leather S."/>
            <person name="Moule S."/>
            <person name="Norberczak H."/>
            <person name="O'Neil S."/>
            <person name="Ormond D."/>
            <person name="Price C."/>
            <person name="Rabbinowitsch E."/>
            <person name="Rutter S."/>
            <person name="Sanders M."/>
            <person name="Saunders D."/>
            <person name="Seeger K."/>
            <person name="Sharp S."/>
            <person name="Simmonds M."/>
            <person name="Skelton J."/>
            <person name="Squares R."/>
            <person name="Squares S."/>
            <person name="Stevens K."/>
            <person name="Unwin L."/>
            <person name="Whitehead S."/>
            <person name="Barrell B.G."/>
            <person name="Maskell D.J."/>
        </authorList>
    </citation>
    <scope>NUCLEOTIDE SEQUENCE [LARGE SCALE GENOMIC DNA]</scope>
    <source>
        <strain>12822 / ATCC BAA-587 / NCTC 13253</strain>
    </source>
</reference>
<comment type="function">
    <text evidence="1">Plays a critical role in the incorporation of lipoproteins in the outer membrane after they are released by the LolA protein.</text>
</comment>
<comment type="subunit">
    <text evidence="1">Monomer.</text>
</comment>
<comment type="subcellular location">
    <subcellularLocation>
        <location evidence="1">Cell outer membrane</location>
        <topology evidence="1">Lipid-anchor</topology>
    </subcellularLocation>
</comment>
<comment type="similarity">
    <text evidence="1">Belongs to the LolB family.</text>
</comment>
<evidence type="ECO:0000255" key="1">
    <source>
        <dbReference type="HAMAP-Rule" id="MF_00233"/>
    </source>
</evidence>
<proteinExistence type="inferred from homology"/>
<gene>
    <name evidence="1" type="primary">lolB</name>
    <name type="ordered locus">BPP0815</name>
</gene>
<name>LOLB_BORPA</name>
<dbReference type="EMBL" id="BX640425">
    <property type="protein sequence ID" value="CAE40224.1"/>
    <property type="molecule type" value="Genomic_DNA"/>
</dbReference>
<dbReference type="RefSeq" id="WP_010927697.1">
    <property type="nucleotide sequence ID" value="NC_002928.3"/>
</dbReference>
<dbReference type="SMR" id="Q7W183"/>
<dbReference type="GeneID" id="93202565"/>
<dbReference type="KEGG" id="bpa:BPP0815"/>
<dbReference type="HOGENOM" id="CLU_092816_3_0_4"/>
<dbReference type="Proteomes" id="UP000001421">
    <property type="component" value="Chromosome"/>
</dbReference>
<dbReference type="GO" id="GO:0009279">
    <property type="term" value="C:cell outer membrane"/>
    <property type="evidence" value="ECO:0007669"/>
    <property type="project" value="UniProtKB-SubCell"/>
</dbReference>
<dbReference type="GO" id="GO:0044874">
    <property type="term" value="P:lipoprotein localization to outer membrane"/>
    <property type="evidence" value="ECO:0007669"/>
    <property type="project" value="UniProtKB-UniRule"/>
</dbReference>
<dbReference type="GO" id="GO:0015031">
    <property type="term" value="P:protein transport"/>
    <property type="evidence" value="ECO:0007669"/>
    <property type="project" value="UniProtKB-KW"/>
</dbReference>
<dbReference type="CDD" id="cd16326">
    <property type="entry name" value="LolB"/>
    <property type="match status" value="1"/>
</dbReference>
<dbReference type="Gene3D" id="2.50.20.10">
    <property type="entry name" value="Lipoprotein localisation LolA/LolB/LppX"/>
    <property type="match status" value="1"/>
</dbReference>
<dbReference type="HAMAP" id="MF_00233">
    <property type="entry name" value="LolB"/>
    <property type="match status" value="1"/>
</dbReference>
<dbReference type="InterPro" id="IPR029046">
    <property type="entry name" value="LolA/LolB/LppX"/>
</dbReference>
<dbReference type="InterPro" id="IPR004565">
    <property type="entry name" value="OM_lipoprot_LolB"/>
</dbReference>
<dbReference type="NCBIfam" id="TIGR00548">
    <property type="entry name" value="lolB"/>
    <property type="match status" value="1"/>
</dbReference>
<dbReference type="Pfam" id="PF03550">
    <property type="entry name" value="LolB"/>
    <property type="match status" value="1"/>
</dbReference>
<dbReference type="SUPFAM" id="SSF89392">
    <property type="entry name" value="Prokaryotic lipoproteins and lipoprotein localization factors"/>
    <property type="match status" value="1"/>
</dbReference>
<sequence length="199" mass="21362">MSVCPAPRSPVRWLHAFTLCLLLAVLAGCVSVPKPMAGAGEDVFSRVGRFAITVTESDGKQQAVQGGFAWRDDGGSYLLDLTNPLGSTEARVEGRPGMAVLTRANGERLAAEHPDALAEDALGSPVPVTGLRDWLRGRLMAGAAPDGLERDAQGRPTAFEQDGWNARLSRYDAQGPQLLVLQRQEPGRRILVRLVITQP</sequence>
<accession>Q7W183</accession>
<protein>
    <recommendedName>
        <fullName evidence="1">Outer-membrane lipoprotein LolB</fullName>
    </recommendedName>
</protein>
<feature type="signal peptide" evidence="1">
    <location>
        <begin position="1"/>
        <end position="28"/>
    </location>
</feature>
<feature type="chain" id="PRO_0000018292" description="Outer-membrane lipoprotein LolB">
    <location>
        <begin position="29"/>
        <end position="199"/>
    </location>
</feature>
<feature type="lipid moiety-binding region" description="N-palmitoyl cysteine" evidence="1">
    <location>
        <position position="29"/>
    </location>
</feature>
<feature type="lipid moiety-binding region" description="S-diacylglycerol cysteine" evidence="1">
    <location>
        <position position="29"/>
    </location>
</feature>